<organism>
    <name type="scientific">Bacillus subtilis (strain 168)</name>
    <dbReference type="NCBI Taxonomy" id="224308"/>
    <lineage>
        <taxon>Bacteria</taxon>
        <taxon>Bacillati</taxon>
        <taxon>Bacillota</taxon>
        <taxon>Bacilli</taxon>
        <taxon>Bacillales</taxon>
        <taxon>Bacillaceae</taxon>
        <taxon>Bacillus</taxon>
    </lineage>
</organism>
<comment type="subcellular location">
    <subcellularLocation>
        <location evidence="3">Spore cortex</location>
    </subcellularLocation>
    <text>Within the spore integument, mainly in the cortex layer with a part in the inner region of the coat layer.</text>
</comment>
<comment type="induction">
    <text>Transcribed by SigG at time T3 of sporulation.</text>
</comment>
<comment type="miscellaneous">
    <text>Present in spore but not in vegetative cell.</text>
</comment>
<comment type="sequence caution" evidence="4">
    <conflict type="erroneous initiation">
        <sequence resource="EMBL-CDS" id="BAA24944"/>
    </conflict>
</comment>
<comment type="sequence caution" evidence="4">
    <conflict type="erroneous initiation">
        <sequence resource="EMBL-CDS" id="CAB75323"/>
    </conflict>
</comment>
<feature type="signal peptide" evidence="1">
    <location>
        <begin position="1"/>
        <end position="21"/>
    </location>
</feature>
<feature type="chain" id="PRO_0000079277" description="Sporulation cortex protein CoxA">
    <location>
        <begin position="22"/>
        <end position="198"/>
    </location>
</feature>
<feature type="region of interest" description="Disordered" evidence="2">
    <location>
        <begin position="91"/>
        <end position="115"/>
    </location>
</feature>
<feature type="compositionally biased region" description="Low complexity" evidence="2">
    <location>
        <begin position="95"/>
        <end position="115"/>
    </location>
</feature>
<feature type="sequence conflict" description="In Ref. 2; CAB75323 and 3; CAB14743." evidence="4" ref="2 3">
    <original>N</original>
    <variation>D</variation>
    <location>
        <position position="107"/>
    </location>
</feature>
<feature type="sequence conflict" description="In Ref. 1; BAA24944." evidence="4" ref="1">
    <original>V</original>
    <variation>I</variation>
    <location>
        <position position="137"/>
    </location>
</feature>
<keyword id="KW-1185">Reference proteome</keyword>
<keyword id="KW-0732">Signal</keyword>
<keyword id="KW-0749">Sporulation</keyword>
<proteinExistence type="evidence at transcript level"/>
<name>COXA_BACSU</name>
<sequence length="198" mass="22117">MGKKMTIASLILMTAGLTACGANDNAMNDTRNNGNTRPIGYYTNENDADRQGDGIDHDGPVSELMEDQNDGNRNTTNVNNRDRVTADDRVPLATDGTYNNTNNRNMNRNAANNGYDNQENRRLAAKIANRVKQVKNVNDTQVMVSDDRVVIAVKSHREFTKSDRDNVVKAARNYANGRDVQVSTDKGLFRKLHKMNNR</sequence>
<dbReference type="EMBL" id="D50551">
    <property type="protein sequence ID" value="BAA24944.1"/>
    <property type="status" value="ALT_INIT"/>
    <property type="molecule type" value="Genomic_DNA"/>
</dbReference>
<dbReference type="EMBL" id="Y15896">
    <property type="protein sequence ID" value="CAB75323.1"/>
    <property type="status" value="ALT_INIT"/>
    <property type="molecule type" value="Genomic_DNA"/>
</dbReference>
<dbReference type="EMBL" id="AL009126">
    <property type="protein sequence ID" value="CAB14743.2"/>
    <property type="molecule type" value="Genomic_DNA"/>
</dbReference>
<dbReference type="PIR" id="A69972">
    <property type="entry name" value="A69972"/>
</dbReference>
<dbReference type="RefSeq" id="WP_003245996.1">
    <property type="nucleotide sequence ID" value="NZ_OZ025638.1"/>
</dbReference>
<dbReference type="SMR" id="P94446"/>
<dbReference type="FunCoup" id="P94446">
    <property type="interactions" value="54"/>
</dbReference>
<dbReference type="STRING" id="224308.BSU27830"/>
<dbReference type="PaxDb" id="224308-BSU27830"/>
<dbReference type="EnsemblBacteria" id="CAB14743">
    <property type="protein sequence ID" value="CAB14743"/>
    <property type="gene ID" value="BSU_27830"/>
</dbReference>
<dbReference type="GeneID" id="937516"/>
<dbReference type="KEGG" id="bsu:BSU27830"/>
<dbReference type="PATRIC" id="fig|224308.179.peg.3024"/>
<dbReference type="InParanoid" id="P94446"/>
<dbReference type="OrthoDB" id="2988958at2"/>
<dbReference type="BioCyc" id="BSUB:BSU27830-MONOMER"/>
<dbReference type="Proteomes" id="UP000001570">
    <property type="component" value="Chromosome"/>
</dbReference>
<dbReference type="GO" id="GO:0043595">
    <property type="term" value="C:endospore cortex"/>
    <property type="evidence" value="ECO:0007669"/>
    <property type="project" value="UniProtKB-SubCell"/>
</dbReference>
<dbReference type="GO" id="GO:0030435">
    <property type="term" value="P:sporulation resulting in formation of a cellular spore"/>
    <property type="evidence" value="ECO:0007669"/>
    <property type="project" value="UniProtKB-KW"/>
</dbReference>
<dbReference type="InterPro" id="IPR019076">
    <property type="entry name" value="Spore_lipoprot_YhcN/YlaJ-like"/>
</dbReference>
<dbReference type="Pfam" id="PF09580">
    <property type="entry name" value="Spore_YhcN_YlaJ"/>
    <property type="match status" value="1"/>
</dbReference>
<dbReference type="PROSITE" id="PS51257">
    <property type="entry name" value="PROKAR_LIPOPROTEIN"/>
    <property type="match status" value="1"/>
</dbReference>
<protein>
    <recommendedName>
        <fullName>Sporulation cortex protein CoxA</fullName>
    </recommendedName>
</protein>
<gene>
    <name type="primary">coxA</name>
    <name type="synonym">yrbB</name>
    <name type="ordered locus">BSU27830</name>
</gene>
<evidence type="ECO:0000255" key="1">
    <source>
        <dbReference type="PROSITE-ProRule" id="PRU00303"/>
    </source>
</evidence>
<evidence type="ECO:0000256" key="2">
    <source>
        <dbReference type="SAM" id="MobiDB-lite"/>
    </source>
</evidence>
<evidence type="ECO:0000269" key="3">
    <source>
    </source>
</evidence>
<evidence type="ECO:0000305" key="4"/>
<reference key="1">
    <citation type="journal article" date="1998" name="FEMS Microbiol. Lett.">
        <title>Cloning of a novel gene yrbB, encoding a protein located in the spore integument of Bacillus subtilis.</title>
        <authorList>
            <person name="Takamatsu H."/>
            <person name="Hiraoka T."/>
            <person name="Kodama T."/>
            <person name="Koide H."/>
            <person name="Kozuka S."/>
            <person name="Tochikubo K."/>
            <person name="Watabe K."/>
        </authorList>
    </citation>
    <scope>NUCLEOTIDE SEQUENCE [GENOMIC DNA]</scope>
    <scope>SUBCELLULAR LOCATION</scope>
    <source>
        <strain>168 / 60015</strain>
    </source>
</reference>
<reference key="2">
    <citation type="submission" date="1997-12" db="EMBL/GenBank/DDBJ databases">
        <title>A 17.8 kb segment in the spoVB-nadC region of the Bacillus subtilis 168 chromosome: sequencing and ruv operon identification.</title>
        <authorList>
            <person name="Tosato V."/>
            <person name="Bolotin A."/>
            <person name="Bertani I."/>
            <person name="Valentino I."/>
            <person name="Bruschi C.V."/>
        </authorList>
    </citation>
    <scope>NUCLEOTIDE SEQUENCE [GENOMIC DNA]</scope>
    <source>
        <strain>168</strain>
    </source>
</reference>
<reference key="3">
    <citation type="journal article" date="1997" name="Nature">
        <title>The complete genome sequence of the Gram-positive bacterium Bacillus subtilis.</title>
        <authorList>
            <person name="Kunst F."/>
            <person name="Ogasawara N."/>
            <person name="Moszer I."/>
            <person name="Albertini A.M."/>
            <person name="Alloni G."/>
            <person name="Azevedo V."/>
            <person name="Bertero M.G."/>
            <person name="Bessieres P."/>
            <person name="Bolotin A."/>
            <person name="Borchert S."/>
            <person name="Borriss R."/>
            <person name="Boursier L."/>
            <person name="Brans A."/>
            <person name="Braun M."/>
            <person name="Brignell S.C."/>
            <person name="Bron S."/>
            <person name="Brouillet S."/>
            <person name="Bruschi C.V."/>
            <person name="Caldwell B."/>
            <person name="Capuano V."/>
            <person name="Carter N.M."/>
            <person name="Choi S.-K."/>
            <person name="Codani J.-J."/>
            <person name="Connerton I.F."/>
            <person name="Cummings N.J."/>
            <person name="Daniel R.A."/>
            <person name="Denizot F."/>
            <person name="Devine K.M."/>
            <person name="Duesterhoeft A."/>
            <person name="Ehrlich S.D."/>
            <person name="Emmerson P.T."/>
            <person name="Entian K.-D."/>
            <person name="Errington J."/>
            <person name="Fabret C."/>
            <person name="Ferrari E."/>
            <person name="Foulger D."/>
            <person name="Fritz C."/>
            <person name="Fujita M."/>
            <person name="Fujita Y."/>
            <person name="Fuma S."/>
            <person name="Galizzi A."/>
            <person name="Galleron N."/>
            <person name="Ghim S.-Y."/>
            <person name="Glaser P."/>
            <person name="Goffeau A."/>
            <person name="Golightly E.J."/>
            <person name="Grandi G."/>
            <person name="Guiseppi G."/>
            <person name="Guy B.J."/>
            <person name="Haga K."/>
            <person name="Haiech J."/>
            <person name="Harwood C.R."/>
            <person name="Henaut A."/>
            <person name="Hilbert H."/>
            <person name="Holsappel S."/>
            <person name="Hosono S."/>
            <person name="Hullo M.-F."/>
            <person name="Itaya M."/>
            <person name="Jones L.-M."/>
            <person name="Joris B."/>
            <person name="Karamata D."/>
            <person name="Kasahara Y."/>
            <person name="Klaerr-Blanchard M."/>
            <person name="Klein C."/>
            <person name="Kobayashi Y."/>
            <person name="Koetter P."/>
            <person name="Koningstein G."/>
            <person name="Krogh S."/>
            <person name="Kumano M."/>
            <person name="Kurita K."/>
            <person name="Lapidus A."/>
            <person name="Lardinois S."/>
            <person name="Lauber J."/>
            <person name="Lazarevic V."/>
            <person name="Lee S.-M."/>
            <person name="Levine A."/>
            <person name="Liu H."/>
            <person name="Masuda S."/>
            <person name="Mauel C."/>
            <person name="Medigue C."/>
            <person name="Medina N."/>
            <person name="Mellado R.P."/>
            <person name="Mizuno M."/>
            <person name="Moestl D."/>
            <person name="Nakai S."/>
            <person name="Noback M."/>
            <person name="Noone D."/>
            <person name="O'Reilly M."/>
            <person name="Ogawa K."/>
            <person name="Ogiwara A."/>
            <person name="Oudega B."/>
            <person name="Park S.-H."/>
            <person name="Parro V."/>
            <person name="Pohl T.M."/>
            <person name="Portetelle D."/>
            <person name="Porwollik S."/>
            <person name="Prescott A.M."/>
            <person name="Presecan E."/>
            <person name="Pujic P."/>
            <person name="Purnelle B."/>
            <person name="Rapoport G."/>
            <person name="Rey M."/>
            <person name="Reynolds S."/>
            <person name="Rieger M."/>
            <person name="Rivolta C."/>
            <person name="Rocha E."/>
            <person name="Roche B."/>
            <person name="Rose M."/>
            <person name="Sadaie Y."/>
            <person name="Sato T."/>
            <person name="Scanlan E."/>
            <person name="Schleich S."/>
            <person name="Schroeter R."/>
            <person name="Scoffone F."/>
            <person name="Sekiguchi J."/>
            <person name="Sekowska A."/>
            <person name="Seror S.J."/>
            <person name="Serror P."/>
            <person name="Shin B.-S."/>
            <person name="Soldo B."/>
            <person name="Sorokin A."/>
            <person name="Tacconi E."/>
            <person name="Takagi T."/>
            <person name="Takahashi H."/>
            <person name="Takemaru K."/>
            <person name="Takeuchi M."/>
            <person name="Tamakoshi A."/>
            <person name="Tanaka T."/>
            <person name="Terpstra P."/>
            <person name="Tognoni A."/>
            <person name="Tosato V."/>
            <person name="Uchiyama S."/>
            <person name="Vandenbol M."/>
            <person name="Vannier F."/>
            <person name="Vassarotti A."/>
            <person name="Viari A."/>
            <person name="Wambutt R."/>
            <person name="Wedler E."/>
            <person name="Wedler H."/>
            <person name="Weitzenegger T."/>
            <person name="Winters P."/>
            <person name="Wipat A."/>
            <person name="Yamamoto H."/>
            <person name="Yamane K."/>
            <person name="Yasumoto K."/>
            <person name="Yata K."/>
            <person name="Yoshida K."/>
            <person name="Yoshikawa H.-F."/>
            <person name="Zumstein E."/>
            <person name="Yoshikawa H."/>
            <person name="Danchin A."/>
        </authorList>
    </citation>
    <scope>NUCLEOTIDE SEQUENCE [LARGE SCALE GENOMIC DNA]</scope>
    <source>
        <strain>168</strain>
    </source>
</reference>
<reference key="4">
    <citation type="journal article" date="1999" name="J. Bacteriol.">
        <title>Characterization of the yrbA gene of Bacillus subtilis, involved in resistance and germination of spores.</title>
        <authorList>
            <person name="Takamatsu H."/>
            <person name="Kodama T."/>
            <person name="Nakayama T."/>
            <person name="Watabe K."/>
        </authorList>
    </citation>
    <scope>TRANSCRIPTION</scope>
    <source>
        <strain>168</strain>
    </source>
</reference>
<accession>P94446</accession>
<accession>O32061</accession>